<gene>
    <name evidence="1" type="primary">recR</name>
    <name type="ordered locus">azo0959</name>
</gene>
<comment type="function">
    <text evidence="1">May play a role in DNA repair. It seems to be involved in an RecBC-independent recombinational process of DNA repair. It may act with RecF and RecO.</text>
</comment>
<comment type="similarity">
    <text evidence="1">Belongs to the RecR family.</text>
</comment>
<name>RECR_AZOSB</name>
<accession>A1K421</accession>
<reference key="1">
    <citation type="journal article" date="2006" name="Nat. Biotechnol.">
        <title>Complete genome of the mutualistic, N2-fixing grass endophyte Azoarcus sp. strain BH72.</title>
        <authorList>
            <person name="Krause A."/>
            <person name="Ramakumar A."/>
            <person name="Bartels D."/>
            <person name="Battistoni F."/>
            <person name="Bekel T."/>
            <person name="Boch J."/>
            <person name="Boehm M."/>
            <person name="Friedrich F."/>
            <person name="Hurek T."/>
            <person name="Krause L."/>
            <person name="Linke B."/>
            <person name="McHardy A.C."/>
            <person name="Sarkar A."/>
            <person name="Schneiker S."/>
            <person name="Syed A.A."/>
            <person name="Thauer R."/>
            <person name="Vorhoelter F.-J."/>
            <person name="Weidner S."/>
            <person name="Puehler A."/>
            <person name="Reinhold-Hurek B."/>
            <person name="Kaiser O."/>
            <person name="Goesmann A."/>
        </authorList>
    </citation>
    <scope>NUCLEOTIDE SEQUENCE [LARGE SCALE GENOMIC DNA]</scope>
    <source>
        <strain>BH72</strain>
    </source>
</reference>
<organism>
    <name type="scientific">Azoarcus sp. (strain BH72)</name>
    <dbReference type="NCBI Taxonomy" id="418699"/>
    <lineage>
        <taxon>Bacteria</taxon>
        <taxon>Pseudomonadati</taxon>
        <taxon>Pseudomonadota</taxon>
        <taxon>Betaproteobacteria</taxon>
        <taxon>Rhodocyclales</taxon>
        <taxon>Zoogloeaceae</taxon>
        <taxon>Azoarcus</taxon>
    </lineage>
</organism>
<feature type="chain" id="PRO_0000322862" description="Recombination protein RecR">
    <location>
        <begin position="1"/>
        <end position="199"/>
    </location>
</feature>
<feature type="domain" description="Toprim" evidence="1">
    <location>
        <begin position="81"/>
        <end position="176"/>
    </location>
</feature>
<feature type="zinc finger region" description="C4-type" evidence="1">
    <location>
        <begin position="58"/>
        <end position="73"/>
    </location>
</feature>
<protein>
    <recommendedName>
        <fullName evidence="1">Recombination protein RecR</fullName>
    </recommendedName>
</protein>
<dbReference type="EMBL" id="AM406670">
    <property type="protein sequence ID" value="CAL93576.1"/>
    <property type="molecule type" value="Genomic_DNA"/>
</dbReference>
<dbReference type="RefSeq" id="WP_011764693.1">
    <property type="nucleotide sequence ID" value="NC_008702.1"/>
</dbReference>
<dbReference type="SMR" id="A1K421"/>
<dbReference type="STRING" id="62928.azo0959"/>
<dbReference type="KEGG" id="aoa:dqs_1033"/>
<dbReference type="KEGG" id="azo:azo0959"/>
<dbReference type="eggNOG" id="COG0353">
    <property type="taxonomic scope" value="Bacteria"/>
</dbReference>
<dbReference type="HOGENOM" id="CLU_060739_1_2_4"/>
<dbReference type="OrthoDB" id="9802672at2"/>
<dbReference type="Proteomes" id="UP000002588">
    <property type="component" value="Chromosome"/>
</dbReference>
<dbReference type="GO" id="GO:0003677">
    <property type="term" value="F:DNA binding"/>
    <property type="evidence" value="ECO:0007669"/>
    <property type="project" value="UniProtKB-UniRule"/>
</dbReference>
<dbReference type="GO" id="GO:0008270">
    <property type="term" value="F:zinc ion binding"/>
    <property type="evidence" value="ECO:0007669"/>
    <property type="project" value="UniProtKB-KW"/>
</dbReference>
<dbReference type="GO" id="GO:0006310">
    <property type="term" value="P:DNA recombination"/>
    <property type="evidence" value="ECO:0007669"/>
    <property type="project" value="UniProtKB-UniRule"/>
</dbReference>
<dbReference type="GO" id="GO:0006281">
    <property type="term" value="P:DNA repair"/>
    <property type="evidence" value="ECO:0007669"/>
    <property type="project" value="UniProtKB-UniRule"/>
</dbReference>
<dbReference type="CDD" id="cd01025">
    <property type="entry name" value="TOPRIM_recR"/>
    <property type="match status" value="1"/>
</dbReference>
<dbReference type="Gene3D" id="3.40.1360.10">
    <property type="match status" value="1"/>
</dbReference>
<dbReference type="Gene3D" id="1.10.8.420">
    <property type="entry name" value="RecR Domain 1"/>
    <property type="match status" value="1"/>
</dbReference>
<dbReference type="HAMAP" id="MF_00017">
    <property type="entry name" value="RecR"/>
    <property type="match status" value="1"/>
</dbReference>
<dbReference type="InterPro" id="IPR000093">
    <property type="entry name" value="DNA_Rcmb_RecR"/>
</dbReference>
<dbReference type="InterPro" id="IPR023627">
    <property type="entry name" value="Rcmb_RecR"/>
</dbReference>
<dbReference type="InterPro" id="IPR015967">
    <property type="entry name" value="Rcmb_RecR_Znf"/>
</dbReference>
<dbReference type="InterPro" id="IPR006171">
    <property type="entry name" value="TOPRIM_dom"/>
</dbReference>
<dbReference type="InterPro" id="IPR034137">
    <property type="entry name" value="TOPRIM_RecR"/>
</dbReference>
<dbReference type="NCBIfam" id="TIGR00615">
    <property type="entry name" value="recR"/>
    <property type="match status" value="1"/>
</dbReference>
<dbReference type="PANTHER" id="PTHR30446">
    <property type="entry name" value="RECOMBINATION PROTEIN RECR"/>
    <property type="match status" value="1"/>
</dbReference>
<dbReference type="PANTHER" id="PTHR30446:SF0">
    <property type="entry name" value="RECOMBINATION PROTEIN RECR"/>
    <property type="match status" value="1"/>
</dbReference>
<dbReference type="Pfam" id="PF21175">
    <property type="entry name" value="RecR_C"/>
    <property type="match status" value="1"/>
</dbReference>
<dbReference type="Pfam" id="PF21176">
    <property type="entry name" value="RecR_HhH"/>
    <property type="match status" value="1"/>
</dbReference>
<dbReference type="Pfam" id="PF02132">
    <property type="entry name" value="RecR_ZnF"/>
    <property type="match status" value="1"/>
</dbReference>
<dbReference type="Pfam" id="PF13662">
    <property type="entry name" value="Toprim_4"/>
    <property type="match status" value="1"/>
</dbReference>
<dbReference type="SMART" id="SM00493">
    <property type="entry name" value="TOPRIM"/>
    <property type="match status" value="1"/>
</dbReference>
<dbReference type="SUPFAM" id="SSF111304">
    <property type="entry name" value="Recombination protein RecR"/>
    <property type="match status" value="1"/>
</dbReference>
<dbReference type="PROSITE" id="PS50880">
    <property type="entry name" value="TOPRIM"/>
    <property type="match status" value="1"/>
</dbReference>
<proteinExistence type="inferred from homology"/>
<evidence type="ECO:0000255" key="1">
    <source>
        <dbReference type="HAMAP-Rule" id="MF_00017"/>
    </source>
</evidence>
<keyword id="KW-0227">DNA damage</keyword>
<keyword id="KW-0233">DNA recombination</keyword>
<keyword id="KW-0234">DNA repair</keyword>
<keyword id="KW-0479">Metal-binding</keyword>
<keyword id="KW-1185">Reference proteome</keyword>
<keyword id="KW-0862">Zinc</keyword>
<keyword id="KW-0863">Zinc-finger</keyword>
<sequence length="199" mass="21446">MSSPPSSLDELIAALRCLPGVGPKSAQRMAYHLLQRDQRGAARLAGALGHALEVLRHCQRCNNFSEEAVCQRCANPRRDPATLCVVEMPADLAMIEQTQSYNGLYYVLMGRLSPLDGVGPRELGLERLIARATDGEVKEVILATNFTNEGEATAHTVATLLGARGVKVSRISRGVPVGGELEHTDTGTIAQALVERRAF</sequence>